<organismHost>
    <name type="scientific">Homo sapiens</name>
    <name type="common">Human</name>
    <dbReference type="NCBI Taxonomy" id="9606"/>
</organismHost>
<reference key="1">
    <citation type="journal article" date="1995" name="J. Virol.">
        <title>Intragenomic linear amplification of human herpesvirus 6B oriLyt suggests acquisition of oriLyt by transposition.</title>
        <authorList>
            <person name="Stamey F.R."/>
            <person name="Dominguez G."/>
            <person name="Black J.B."/>
            <person name="Dambaugh T.R."/>
            <person name="Pellett P.E."/>
        </authorList>
    </citation>
    <scope>NUCLEOTIDE SEQUENCE [GENOMIC DNA]</scope>
</reference>
<reference key="2">
    <citation type="journal article" date="1999" name="J. Virol.">
        <title>Human herpesvirus 6B genome sequence: coding content and comparison with human herpesvirus 6A.</title>
        <authorList>
            <person name="Dominguez G."/>
            <person name="Dambaugh T.R."/>
            <person name="Stamey F.R."/>
            <person name="Dewhurst S."/>
            <person name="Inoue N."/>
            <person name="Pellett P.E."/>
        </authorList>
    </citation>
    <scope>NUCLEOTIDE SEQUENCE [LARGE SCALE GENOMIC DNA]</scope>
</reference>
<organism>
    <name type="scientific">Human herpesvirus 6B (strain Z29)</name>
    <name type="common">HHV-6 variant B</name>
    <name type="synonym">Human B lymphotropic virus</name>
    <dbReference type="NCBI Taxonomy" id="36351"/>
    <lineage>
        <taxon>Viruses</taxon>
        <taxon>Duplodnaviria</taxon>
        <taxon>Heunggongvirae</taxon>
        <taxon>Peploviricota</taxon>
        <taxon>Herviviricetes</taxon>
        <taxon>Herpesvirales</taxon>
        <taxon>Orthoherpesviridae</taxon>
        <taxon>Betaherpesvirinae</taxon>
        <taxon>Roseolovirus</taxon>
        <taxon>Roseolovirus humanbeta6b</taxon>
        <taxon>Human herpesvirus 6B</taxon>
    </lineage>
</organism>
<name>UL24_HHV6Z</name>
<evidence type="ECO:0000250" key="1"/>
<evidence type="ECO:0000256" key="2">
    <source>
        <dbReference type="SAM" id="MobiDB-lite"/>
    </source>
</evidence>
<evidence type="ECO:0000305" key="3"/>
<gene>
    <name type="primary">U49</name>
    <name type="synonym">KA10R</name>
</gene>
<comment type="function">
    <text evidence="1">May participate in nuclear egress of viral particles. Plays a role in the dispersal of several host nucleolar proteins including NCL/nucleolin and NPM1. Since deletion of host NCL/nucleolin negatively impact on nuclear egress, UL24 supposedly acts on this process through its effect on host nucleoli (By similarity).</text>
</comment>
<comment type="subcellular location">
    <subcellularLocation>
        <location evidence="1">Virion</location>
    </subcellularLocation>
    <subcellularLocation>
        <location evidence="1">Host cytoplasm</location>
    </subcellularLocation>
    <subcellularLocation>
        <location evidence="1">Host nucleus</location>
        <location evidence="1">Host nucleolus</location>
    </subcellularLocation>
    <subcellularLocation>
        <location evidence="1">Host Golgi apparatus</location>
    </subcellularLocation>
</comment>
<comment type="induction">
    <text>Expressed late in the infection cycle.</text>
</comment>
<comment type="similarity">
    <text evidence="3">Belongs to the herpesviridae UL24 family.</text>
</comment>
<dbReference type="EMBL" id="AF157706">
    <property type="protein sequence ID" value="AAB06347.1"/>
    <property type="molecule type" value="Genomic_DNA"/>
</dbReference>
<dbReference type="PIR" id="T44009">
    <property type="entry name" value="T44009"/>
</dbReference>
<dbReference type="RefSeq" id="NP_050230.1">
    <property type="nucleotide sequence ID" value="NC_000898.1"/>
</dbReference>
<dbReference type="DNASU" id="1497051"/>
<dbReference type="GeneID" id="1497051"/>
<dbReference type="KEGG" id="vg:1497051"/>
<dbReference type="Proteomes" id="UP000006930">
    <property type="component" value="Segment"/>
</dbReference>
<dbReference type="GO" id="GO:0044177">
    <property type="term" value="C:host cell Golgi apparatus"/>
    <property type="evidence" value="ECO:0007669"/>
    <property type="project" value="UniProtKB-SubCell"/>
</dbReference>
<dbReference type="GO" id="GO:0044196">
    <property type="term" value="C:host cell nucleolus"/>
    <property type="evidence" value="ECO:0007669"/>
    <property type="project" value="UniProtKB-SubCell"/>
</dbReference>
<dbReference type="GO" id="GO:0044423">
    <property type="term" value="C:virion component"/>
    <property type="evidence" value="ECO:0007669"/>
    <property type="project" value="UniProtKB-KW"/>
</dbReference>
<dbReference type="InterPro" id="IPR002580">
    <property type="entry name" value="Herpes_UL24"/>
</dbReference>
<dbReference type="Pfam" id="PF01646">
    <property type="entry name" value="Herpes_UL24"/>
    <property type="match status" value="1"/>
</dbReference>
<feature type="chain" id="PRO_0000115986" description="Protein UL24 homolog">
    <location>
        <begin position="1"/>
        <end position="252"/>
    </location>
</feature>
<feature type="region of interest" description="Disordered" evidence="2">
    <location>
        <begin position="211"/>
        <end position="252"/>
    </location>
</feature>
<feature type="compositionally biased region" description="Polar residues" evidence="2">
    <location>
        <begin position="212"/>
        <end position="223"/>
    </location>
</feature>
<feature type="compositionally biased region" description="Basic residues" evidence="2">
    <location>
        <begin position="237"/>
        <end position="252"/>
    </location>
</feature>
<accession>P52545</accession>
<keyword id="KW-1035">Host cytoplasm</keyword>
<keyword id="KW-1040">Host Golgi apparatus</keyword>
<keyword id="KW-1048">Host nucleus</keyword>
<keyword id="KW-0426">Late protein</keyword>
<keyword id="KW-1185">Reference proteome</keyword>
<keyword id="KW-0946">Virion</keyword>
<sequence length="252" mass="29324">MSLTGLPDIRKKIGQFHHLRIYKQILSLQGNFARLNYFLGDVFPANLRSASVSVFFEVRLGPRIPDCIVLLKSVDAKDEFAFHCYFFEFKTTLGKSTMQSVHHNCIHQAQYLQGLRQLHQSISFLDQYLIADEVLWNVVPVICFFRQWGLKLDFFKKFSGKTKRLSFSFICDLFARSQDGAVQSLLSIPNYTNFRRACQKHTDLYRRRYQKASKSVLTKTSGENRSRASRQVAKNAPKNRIRRTAKKDAKRQ</sequence>
<protein>
    <recommendedName>
        <fullName>Protein UL24 homolog</fullName>
    </recommendedName>
</protein>
<proteinExistence type="evidence at transcript level"/>